<proteinExistence type="evidence at protein level"/>
<dbReference type="EC" id="2.3.2.27"/>
<dbReference type="EMBL" id="AK045635">
    <property type="protein sequence ID" value="BAC32441.1"/>
    <property type="molecule type" value="mRNA"/>
</dbReference>
<dbReference type="EMBL" id="AK079129">
    <property type="protein sequence ID" value="BAC37553.1"/>
    <property type="molecule type" value="mRNA"/>
</dbReference>
<dbReference type="EMBL" id="AK081261">
    <property type="protein sequence ID" value="BAC38179.1"/>
    <property type="molecule type" value="mRNA"/>
</dbReference>
<dbReference type="EMBL" id="AK144758">
    <property type="protein sequence ID" value="BAE26051.1"/>
    <property type="molecule type" value="mRNA"/>
</dbReference>
<dbReference type="EMBL" id="AK160656">
    <property type="protein sequence ID" value="BAE35944.1"/>
    <property type="molecule type" value="mRNA"/>
</dbReference>
<dbReference type="EMBL" id="AK161231">
    <property type="protein sequence ID" value="BAE36255.1"/>
    <property type="molecule type" value="mRNA"/>
</dbReference>
<dbReference type="EMBL" id="AC125221">
    <property type="status" value="NOT_ANNOTATED_CDS"/>
    <property type="molecule type" value="Genomic_DNA"/>
</dbReference>
<dbReference type="EMBL" id="BC025874">
    <property type="protein sequence ID" value="AAH25874.1"/>
    <property type="molecule type" value="mRNA"/>
</dbReference>
<dbReference type="EMBL" id="U83913">
    <property type="protein sequence ID" value="AAC72432.1"/>
    <property type="status" value="ALT_FRAME"/>
    <property type="molecule type" value="mRNA"/>
</dbReference>
<dbReference type="EMBL" id="U28789">
    <property type="protein sequence ID" value="AAB49620.1"/>
    <property type="molecule type" value="mRNA"/>
</dbReference>
<dbReference type="CCDS" id="CCDS52387.1">
    <molecule id="P97868-1"/>
</dbReference>
<dbReference type="PIR" id="T42727">
    <property type="entry name" value="T42727"/>
</dbReference>
<dbReference type="RefSeq" id="NP_001390012.1">
    <molecule id="P97868-2"/>
    <property type="nucleotide sequence ID" value="NM_001403083.1"/>
</dbReference>
<dbReference type="RefSeq" id="NP_035377.2">
    <molecule id="P97868-1"/>
    <property type="nucleotide sequence ID" value="NM_011247.3"/>
</dbReference>
<dbReference type="RefSeq" id="NP_778188.1">
    <property type="nucleotide sequence ID" value="NM_175023.3"/>
</dbReference>
<dbReference type="RefSeq" id="XP_006507533.1">
    <property type="nucleotide sequence ID" value="XM_006507470.3"/>
</dbReference>
<dbReference type="BMRB" id="P97868"/>
<dbReference type="SMR" id="P97868"/>
<dbReference type="BioGRID" id="202817">
    <property type="interactions" value="8"/>
</dbReference>
<dbReference type="FunCoup" id="P97868">
    <property type="interactions" value="3512"/>
</dbReference>
<dbReference type="IntAct" id="P97868">
    <property type="interactions" value="2"/>
</dbReference>
<dbReference type="MINT" id="P97868"/>
<dbReference type="STRING" id="10090.ENSMUSP00000049528"/>
<dbReference type="GlyGen" id="P97868">
    <property type="glycosylation" value="2 sites, 1 N-linked glycan (1 site), 1 O-linked glycan (1 site)"/>
</dbReference>
<dbReference type="iPTMnet" id="P97868"/>
<dbReference type="PhosphoSitePlus" id="P97868"/>
<dbReference type="jPOST" id="P97868"/>
<dbReference type="PaxDb" id="10090-ENSMUSP00000049528"/>
<dbReference type="PeptideAtlas" id="P97868"/>
<dbReference type="ProteomicsDB" id="255114">
    <molecule id="P97868-1"/>
</dbReference>
<dbReference type="ProteomicsDB" id="255115">
    <molecule id="P97868-2"/>
</dbReference>
<dbReference type="ProteomicsDB" id="255116">
    <molecule id="P97868-3"/>
</dbReference>
<dbReference type="Pumba" id="P97868"/>
<dbReference type="Antibodypedia" id="26070">
    <property type="antibodies" value="353 antibodies from 30 providers"/>
</dbReference>
<dbReference type="DNASU" id="19647"/>
<dbReference type="Ensembl" id="ENSMUST00000052135.14">
    <molecule id="P97868-1"/>
    <property type="protein sequence ID" value="ENSMUSP00000049528.8"/>
    <property type="gene ID" value="ENSMUSG00000030779.17"/>
</dbReference>
<dbReference type="Ensembl" id="ENSMUST00000071590.6">
    <molecule id="P97868-2"/>
    <property type="protein sequence ID" value="ENSMUSP00000071519.6"/>
    <property type="gene ID" value="ENSMUSG00000030779.17"/>
</dbReference>
<dbReference type="GeneID" id="19647"/>
<dbReference type="KEGG" id="mmu:19647"/>
<dbReference type="UCSC" id="uc009jow.2">
    <molecule id="P97868-3"/>
    <property type="organism name" value="mouse"/>
</dbReference>
<dbReference type="UCSC" id="uc009joy.2">
    <molecule id="P97868-1"/>
    <property type="organism name" value="mouse"/>
</dbReference>
<dbReference type="AGR" id="MGI:894835"/>
<dbReference type="CTD" id="5930"/>
<dbReference type="MGI" id="MGI:894835">
    <property type="gene designation" value="Rbbp6"/>
</dbReference>
<dbReference type="VEuPathDB" id="HostDB:ENSMUSG00000030779"/>
<dbReference type="eggNOG" id="KOG0314">
    <property type="taxonomic scope" value="Eukaryota"/>
</dbReference>
<dbReference type="GeneTree" id="ENSGT00940000157561"/>
<dbReference type="HOGENOM" id="CLU_239162_0_0_1"/>
<dbReference type="InParanoid" id="P97868"/>
<dbReference type="OMA" id="IRAMMTQ"/>
<dbReference type="OrthoDB" id="106784at2759"/>
<dbReference type="PhylomeDB" id="P97868"/>
<dbReference type="TreeFam" id="TF350543"/>
<dbReference type="Reactome" id="R-MMU-9013422">
    <property type="pathway name" value="RHOBTB1 GTPase cycle"/>
</dbReference>
<dbReference type="Reactome" id="R-MMU-983168">
    <property type="pathway name" value="Antigen processing: Ubiquitination &amp; Proteasome degradation"/>
</dbReference>
<dbReference type="UniPathway" id="UPA00143"/>
<dbReference type="BioGRID-ORCS" id="19647">
    <property type="hits" value="27 hits in 76 CRISPR screens"/>
</dbReference>
<dbReference type="ChiTaRS" id="Rbbp6">
    <property type="organism name" value="mouse"/>
</dbReference>
<dbReference type="PRO" id="PR:P97868"/>
<dbReference type="Proteomes" id="UP000000589">
    <property type="component" value="Chromosome 7"/>
</dbReference>
<dbReference type="RNAct" id="P97868">
    <property type="molecule type" value="protein"/>
</dbReference>
<dbReference type="Bgee" id="ENSMUSG00000030779">
    <property type="expression patterns" value="Expressed in embryonic post-anal tail and 259 other cell types or tissues"/>
</dbReference>
<dbReference type="ExpressionAtlas" id="P97868">
    <property type="expression patterns" value="baseline and differential"/>
</dbReference>
<dbReference type="GO" id="GO:0005813">
    <property type="term" value="C:centrosome"/>
    <property type="evidence" value="ECO:0007669"/>
    <property type="project" value="UniProtKB-SubCell"/>
</dbReference>
<dbReference type="GO" id="GO:0005694">
    <property type="term" value="C:chromosome"/>
    <property type="evidence" value="ECO:0007669"/>
    <property type="project" value="UniProtKB-SubCell"/>
</dbReference>
<dbReference type="GO" id="GO:0005737">
    <property type="term" value="C:cytoplasm"/>
    <property type="evidence" value="ECO:0007669"/>
    <property type="project" value="UniProtKB-KW"/>
</dbReference>
<dbReference type="GO" id="GO:0016607">
    <property type="term" value="C:nuclear speck"/>
    <property type="evidence" value="ECO:0007669"/>
    <property type="project" value="Ensembl"/>
</dbReference>
<dbReference type="GO" id="GO:0005730">
    <property type="term" value="C:nucleolus"/>
    <property type="evidence" value="ECO:0007669"/>
    <property type="project" value="UniProtKB-SubCell"/>
</dbReference>
<dbReference type="GO" id="GO:0032991">
    <property type="term" value="C:protein-containing complex"/>
    <property type="evidence" value="ECO:0007669"/>
    <property type="project" value="Ensembl"/>
</dbReference>
<dbReference type="GO" id="GO:0003676">
    <property type="term" value="F:nucleic acid binding"/>
    <property type="evidence" value="ECO:0007669"/>
    <property type="project" value="InterPro"/>
</dbReference>
<dbReference type="GO" id="GO:0019901">
    <property type="term" value="F:protein kinase binding"/>
    <property type="evidence" value="ECO:0007669"/>
    <property type="project" value="Ensembl"/>
</dbReference>
<dbReference type="GO" id="GO:0061630">
    <property type="term" value="F:ubiquitin protein ligase activity"/>
    <property type="evidence" value="ECO:0000250"/>
    <property type="project" value="UniProtKB"/>
</dbReference>
<dbReference type="GO" id="GO:0004842">
    <property type="term" value="F:ubiquitin-protein transferase activity"/>
    <property type="evidence" value="ECO:0000250"/>
    <property type="project" value="UniProtKB"/>
</dbReference>
<dbReference type="GO" id="GO:0008270">
    <property type="term" value="F:zinc ion binding"/>
    <property type="evidence" value="ECO:0007669"/>
    <property type="project" value="UniProtKB-KW"/>
</dbReference>
<dbReference type="GO" id="GO:0006974">
    <property type="term" value="P:DNA damage response"/>
    <property type="evidence" value="ECO:0000250"/>
    <property type="project" value="UniProtKB"/>
</dbReference>
<dbReference type="GO" id="GO:0006260">
    <property type="term" value="P:DNA replication"/>
    <property type="evidence" value="ECO:0007669"/>
    <property type="project" value="UniProtKB-KW"/>
</dbReference>
<dbReference type="GO" id="GO:0048568">
    <property type="term" value="P:embryonic organ development"/>
    <property type="evidence" value="ECO:0000316"/>
    <property type="project" value="MGI"/>
</dbReference>
<dbReference type="GO" id="GO:0001701">
    <property type="term" value="P:in utero embryonic development"/>
    <property type="evidence" value="ECO:0000315"/>
    <property type="project" value="MGI"/>
</dbReference>
<dbReference type="GO" id="GO:0006397">
    <property type="term" value="P:mRNA processing"/>
    <property type="evidence" value="ECO:0007669"/>
    <property type="project" value="InterPro"/>
</dbReference>
<dbReference type="GO" id="GO:0035264">
    <property type="term" value="P:multicellular organism growth"/>
    <property type="evidence" value="ECO:0000315"/>
    <property type="project" value="MGI"/>
</dbReference>
<dbReference type="GO" id="GO:0016567">
    <property type="term" value="P:protein ubiquitination"/>
    <property type="evidence" value="ECO:0007669"/>
    <property type="project" value="UniProtKB-UniPathway"/>
</dbReference>
<dbReference type="GO" id="GO:0006275">
    <property type="term" value="P:regulation of DNA replication"/>
    <property type="evidence" value="ECO:0000250"/>
    <property type="project" value="UniProtKB"/>
</dbReference>
<dbReference type="GO" id="GO:0061053">
    <property type="term" value="P:somite development"/>
    <property type="evidence" value="ECO:0000315"/>
    <property type="project" value="MGI"/>
</dbReference>
<dbReference type="GO" id="GO:0006511">
    <property type="term" value="P:ubiquitin-dependent protein catabolic process"/>
    <property type="evidence" value="ECO:0000315"/>
    <property type="project" value="UniProtKB"/>
</dbReference>
<dbReference type="CDD" id="cd16620">
    <property type="entry name" value="vRING-HC-C4C4_RBBP6"/>
    <property type="match status" value="1"/>
</dbReference>
<dbReference type="FunFam" id="4.10.60.10:FF:000005">
    <property type="entry name" value="E3 ubiquitin-protein ligase RBBP6"/>
    <property type="match status" value="1"/>
</dbReference>
<dbReference type="FunFam" id="3.30.40.10:FF:000139">
    <property type="entry name" value="E3 ubiquitin-protein ligase RBBP6 isoform X1"/>
    <property type="match status" value="1"/>
</dbReference>
<dbReference type="FunFam" id="3.10.20.90:FF:000070">
    <property type="entry name" value="E3 ubiquitin-protein ligase RBBP6 isoform X2"/>
    <property type="match status" value="1"/>
</dbReference>
<dbReference type="Gene3D" id="3.10.20.90">
    <property type="entry name" value="Phosphatidylinositol 3-kinase Catalytic Subunit, Chain A, domain 1"/>
    <property type="match status" value="1"/>
</dbReference>
<dbReference type="Gene3D" id="4.10.60.10">
    <property type="entry name" value="Zinc finger, CCHC-type"/>
    <property type="match status" value="1"/>
</dbReference>
<dbReference type="Gene3D" id="3.30.40.10">
    <property type="entry name" value="Zinc/RING finger domain, C3HC4 (zinc finger)"/>
    <property type="match status" value="1"/>
</dbReference>
<dbReference type="InterPro" id="IPR014891">
    <property type="entry name" value="DWNN_domain"/>
</dbReference>
<dbReference type="InterPro" id="IPR033489">
    <property type="entry name" value="RBBP6"/>
</dbReference>
<dbReference type="InterPro" id="IPR003613">
    <property type="entry name" value="Ubox_domain"/>
</dbReference>
<dbReference type="InterPro" id="IPR025829">
    <property type="entry name" value="Zn_knuckle_CX2CX3GHX4C"/>
</dbReference>
<dbReference type="InterPro" id="IPR001878">
    <property type="entry name" value="Znf_CCHC"/>
</dbReference>
<dbReference type="InterPro" id="IPR036875">
    <property type="entry name" value="Znf_CCHC_sf"/>
</dbReference>
<dbReference type="InterPro" id="IPR001841">
    <property type="entry name" value="Znf_RING"/>
</dbReference>
<dbReference type="InterPro" id="IPR013083">
    <property type="entry name" value="Znf_RING/FYVE/PHD"/>
</dbReference>
<dbReference type="PANTHER" id="PTHR15439:SF0">
    <property type="entry name" value="CELL DIVISION CYCLE AND APOPTOSIS REGULATOR PROTEIN 1-RELATED"/>
    <property type="match status" value="1"/>
</dbReference>
<dbReference type="PANTHER" id="PTHR15439">
    <property type="entry name" value="RETINOBLASTOMA-BINDING PROTEIN 6"/>
    <property type="match status" value="1"/>
</dbReference>
<dbReference type="Pfam" id="PF08783">
    <property type="entry name" value="DWNN"/>
    <property type="match status" value="1"/>
</dbReference>
<dbReference type="Pfam" id="PF04564">
    <property type="entry name" value="U-box"/>
    <property type="match status" value="1"/>
</dbReference>
<dbReference type="Pfam" id="PF13696">
    <property type="entry name" value="zf-CCHC_2"/>
    <property type="match status" value="1"/>
</dbReference>
<dbReference type="SMART" id="SM01180">
    <property type="entry name" value="DWNN"/>
    <property type="match status" value="1"/>
</dbReference>
<dbReference type="SMART" id="SM00184">
    <property type="entry name" value="RING"/>
    <property type="match status" value="1"/>
</dbReference>
<dbReference type="SMART" id="SM00343">
    <property type="entry name" value="ZnF_C2HC"/>
    <property type="match status" value="1"/>
</dbReference>
<dbReference type="SUPFAM" id="SSF57756">
    <property type="entry name" value="Retrovirus zinc finger-like domains"/>
    <property type="match status" value="1"/>
</dbReference>
<dbReference type="SUPFAM" id="SSF57850">
    <property type="entry name" value="RING/U-box"/>
    <property type="match status" value="1"/>
</dbReference>
<dbReference type="PROSITE" id="PS51282">
    <property type="entry name" value="DWNN"/>
    <property type="match status" value="1"/>
</dbReference>
<dbReference type="PROSITE" id="PS50158">
    <property type="entry name" value="ZF_CCHC"/>
    <property type="match status" value="1"/>
</dbReference>
<dbReference type="PROSITE" id="PS50089">
    <property type="entry name" value="ZF_RING_2"/>
    <property type="match status" value="1"/>
</dbReference>
<reference key="1">
    <citation type="journal article" date="2005" name="Science">
        <title>The transcriptional landscape of the mammalian genome.</title>
        <authorList>
            <person name="Carninci P."/>
            <person name="Kasukawa T."/>
            <person name="Katayama S."/>
            <person name="Gough J."/>
            <person name="Frith M.C."/>
            <person name="Maeda N."/>
            <person name="Oyama R."/>
            <person name="Ravasi T."/>
            <person name="Lenhard B."/>
            <person name="Wells C."/>
            <person name="Kodzius R."/>
            <person name="Shimokawa K."/>
            <person name="Bajic V.B."/>
            <person name="Brenner S.E."/>
            <person name="Batalov S."/>
            <person name="Forrest A.R."/>
            <person name="Zavolan M."/>
            <person name="Davis M.J."/>
            <person name="Wilming L.G."/>
            <person name="Aidinis V."/>
            <person name="Allen J.E."/>
            <person name="Ambesi-Impiombato A."/>
            <person name="Apweiler R."/>
            <person name="Aturaliya R.N."/>
            <person name="Bailey T.L."/>
            <person name="Bansal M."/>
            <person name="Baxter L."/>
            <person name="Beisel K.W."/>
            <person name="Bersano T."/>
            <person name="Bono H."/>
            <person name="Chalk A.M."/>
            <person name="Chiu K.P."/>
            <person name="Choudhary V."/>
            <person name="Christoffels A."/>
            <person name="Clutterbuck D.R."/>
            <person name="Crowe M.L."/>
            <person name="Dalla E."/>
            <person name="Dalrymple B.P."/>
            <person name="de Bono B."/>
            <person name="Della Gatta G."/>
            <person name="di Bernardo D."/>
            <person name="Down T."/>
            <person name="Engstrom P."/>
            <person name="Fagiolini M."/>
            <person name="Faulkner G."/>
            <person name="Fletcher C.F."/>
            <person name="Fukushima T."/>
            <person name="Furuno M."/>
            <person name="Futaki S."/>
            <person name="Gariboldi M."/>
            <person name="Georgii-Hemming P."/>
            <person name="Gingeras T.R."/>
            <person name="Gojobori T."/>
            <person name="Green R.E."/>
            <person name="Gustincich S."/>
            <person name="Harbers M."/>
            <person name="Hayashi Y."/>
            <person name="Hensch T.K."/>
            <person name="Hirokawa N."/>
            <person name="Hill D."/>
            <person name="Huminiecki L."/>
            <person name="Iacono M."/>
            <person name="Ikeo K."/>
            <person name="Iwama A."/>
            <person name="Ishikawa T."/>
            <person name="Jakt M."/>
            <person name="Kanapin A."/>
            <person name="Katoh M."/>
            <person name="Kawasawa Y."/>
            <person name="Kelso J."/>
            <person name="Kitamura H."/>
            <person name="Kitano H."/>
            <person name="Kollias G."/>
            <person name="Krishnan S.P."/>
            <person name="Kruger A."/>
            <person name="Kummerfeld S.K."/>
            <person name="Kurochkin I.V."/>
            <person name="Lareau L.F."/>
            <person name="Lazarevic D."/>
            <person name="Lipovich L."/>
            <person name="Liu J."/>
            <person name="Liuni S."/>
            <person name="McWilliam S."/>
            <person name="Madan Babu M."/>
            <person name="Madera M."/>
            <person name="Marchionni L."/>
            <person name="Matsuda H."/>
            <person name="Matsuzawa S."/>
            <person name="Miki H."/>
            <person name="Mignone F."/>
            <person name="Miyake S."/>
            <person name="Morris K."/>
            <person name="Mottagui-Tabar S."/>
            <person name="Mulder N."/>
            <person name="Nakano N."/>
            <person name="Nakauchi H."/>
            <person name="Ng P."/>
            <person name="Nilsson R."/>
            <person name="Nishiguchi S."/>
            <person name="Nishikawa S."/>
            <person name="Nori F."/>
            <person name="Ohara O."/>
            <person name="Okazaki Y."/>
            <person name="Orlando V."/>
            <person name="Pang K.C."/>
            <person name="Pavan W.J."/>
            <person name="Pavesi G."/>
            <person name="Pesole G."/>
            <person name="Petrovsky N."/>
            <person name="Piazza S."/>
            <person name="Reed J."/>
            <person name="Reid J.F."/>
            <person name="Ring B.Z."/>
            <person name="Ringwald M."/>
            <person name="Rost B."/>
            <person name="Ruan Y."/>
            <person name="Salzberg S.L."/>
            <person name="Sandelin A."/>
            <person name="Schneider C."/>
            <person name="Schoenbach C."/>
            <person name="Sekiguchi K."/>
            <person name="Semple C.A."/>
            <person name="Seno S."/>
            <person name="Sessa L."/>
            <person name="Sheng Y."/>
            <person name="Shibata Y."/>
            <person name="Shimada H."/>
            <person name="Shimada K."/>
            <person name="Silva D."/>
            <person name="Sinclair B."/>
            <person name="Sperling S."/>
            <person name="Stupka E."/>
            <person name="Sugiura K."/>
            <person name="Sultana R."/>
            <person name="Takenaka Y."/>
            <person name="Taki K."/>
            <person name="Tammoja K."/>
            <person name="Tan S.L."/>
            <person name="Tang S."/>
            <person name="Taylor M.S."/>
            <person name="Tegner J."/>
            <person name="Teichmann S.A."/>
            <person name="Ueda H.R."/>
            <person name="van Nimwegen E."/>
            <person name="Verardo R."/>
            <person name="Wei C.L."/>
            <person name="Yagi K."/>
            <person name="Yamanishi H."/>
            <person name="Zabarovsky E."/>
            <person name="Zhu S."/>
            <person name="Zimmer A."/>
            <person name="Hide W."/>
            <person name="Bult C."/>
            <person name="Grimmond S.M."/>
            <person name="Teasdale R.D."/>
            <person name="Liu E.T."/>
            <person name="Brusic V."/>
            <person name="Quackenbush J."/>
            <person name="Wahlestedt C."/>
            <person name="Mattick J.S."/>
            <person name="Hume D.A."/>
            <person name="Kai C."/>
            <person name="Sasaki D."/>
            <person name="Tomaru Y."/>
            <person name="Fukuda S."/>
            <person name="Kanamori-Katayama M."/>
            <person name="Suzuki M."/>
            <person name="Aoki J."/>
            <person name="Arakawa T."/>
            <person name="Iida J."/>
            <person name="Imamura K."/>
            <person name="Itoh M."/>
            <person name="Kato T."/>
            <person name="Kawaji H."/>
            <person name="Kawagashira N."/>
            <person name="Kawashima T."/>
            <person name="Kojima M."/>
            <person name="Kondo S."/>
            <person name="Konno H."/>
            <person name="Nakano K."/>
            <person name="Ninomiya N."/>
            <person name="Nishio T."/>
            <person name="Okada M."/>
            <person name="Plessy C."/>
            <person name="Shibata K."/>
            <person name="Shiraki T."/>
            <person name="Suzuki S."/>
            <person name="Tagami M."/>
            <person name="Waki K."/>
            <person name="Watahiki A."/>
            <person name="Okamura-Oho Y."/>
            <person name="Suzuki H."/>
            <person name="Kawai J."/>
            <person name="Hayashizaki Y."/>
        </authorList>
    </citation>
    <scope>NUCLEOTIDE SEQUENCE [LARGE SCALE MRNA] (ISOFORM 3)</scope>
    <scope>NUCLEOTIDE SEQUENCE [LARGE SCALE MRNA] OF 546-1148 (ISOFORM 2)</scope>
    <scope>NUCLEOTIDE SEQUENCE [LARGE SCALE MRNA] OF 1356-1790 (ISOFORMS 1/2)</scope>
    <source>
        <strain>C57BL/6J</strain>
        <tissue>Corpora quadrigemina</tissue>
        <tissue>Corpus striatum</tissue>
        <tissue>Embryo</tissue>
        <tissue>Head</tissue>
        <tissue>Lung</tissue>
    </source>
</reference>
<reference key="2">
    <citation type="journal article" date="2009" name="PLoS Biol.">
        <title>Lineage-specific biology revealed by a finished genome assembly of the mouse.</title>
        <authorList>
            <person name="Church D.M."/>
            <person name="Goodstadt L."/>
            <person name="Hillier L.W."/>
            <person name="Zody M.C."/>
            <person name="Goldstein S."/>
            <person name="She X."/>
            <person name="Bult C.J."/>
            <person name="Agarwala R."/>
            <person name="Cherry J.L."/>
            <person name="DiCuccio M."/>
            <person name="Hlavina W."/>
            <person name="Kapustin Y."/>
            <person name="Meric P."/>
            <person name="Maglott D."/>
            <person name="Birtle Z."/>
            <person name="Marques A.C."/>
            <person name="Graves T."/>
            <person name="Zhou S."/>
            <person name="Teague B."/>
            <person name="Potamousis K."/>
            <person name="Churas C."/>
            <person name="Place M."/>
            <person name="Herschleb J."/>
            <person name="Runnheim R."/>
            <person name="Forrest D."/>
            <person name="Amos-Landgraf J."/>
            <person name="Schwartz D.C."/>
            <person name="Cheng Z."/>
            <person name="Lindblad-Toh K."/>
            <person name="Eichler E.E."/>
            <person name="Ponting C.P."/>
        </authorList>
    </citation>
    <scope>NUCLEOTIDE SEQUENCE [LARGE SCALE GENOMIC DNA]</scope>
    <source>
        <strain>C57BL/6J</strain>
    </source>
</reference>
<reference key="3">
    <citation type="journal article" date="2004" name="Genome Res.">
        <title>The status, quality, and expansion of the NIH full-length cDNA project: the Mammalian Gene Collection (MGC).</title>
        <authorList>
            <consortium name="The MGC Project Team"/>
        </authorList>
    </citation>
    <scope>NUCLEOTIDE SEQUENCE [LARGE SCALE MRNA] (ISOFORM 3)</scope>
    <source>
        <strain>FVB/N-3</strain>
        <tissue>Mammary tumor</tissue>
    </source>
</reference>
<reference key="4">
    <citation type="journal article" date="1997" name="Proc. Natl. Acad. Sci. U.S.A.">
        <title>The proliferation potential protein-related (P2P-R) gene with domains encoding heterogeneous nuclear ribonucleoprotein association and Rb1 binding shows repressed expression during terminal differentiation.</title>
        <authorList>
            <person name="Witte M.M."/>
            <person name="Scott R.E."/>
        </authorList>
    </citation>
    <scope>NUCLEOTIDE SEQUENCE [MRNA] OF 154-1790 (ISOFORM 2)</scope>
    <scope>INTERACTION WITH RB1</scope>
    <scope>TISSUE SPECIFICITY</scope>
    <scope>DEVELOPMENTAL STAGE</scope>
    <source>
        <strain>BALB/cJ</strain>
    </source>
</reference>
<reference key="5">
    <citation type="journal article" date="1997" name="Oncogene">
        <title>PACT: cloning and characterization of a cellular p53 binding protein that interacts with Rb.</title>
        <authorList>
            <person name="Simons A."/>
            <person name="Melamed-Bessudo C."/>
            <person name="Wolkowicz R."/>
            <person name="Sperling J."/>
            <person name="Sperling R."/>
            <person name="Eisenbach L."/>
            <person name="Rotter V."/>
        </authorList>
    </citation>
    <scope>NUCLEOTIDE SEQUENCE [MRNA] OF 204-1790 (ISOFORM 1)</scope>
    <scope>INTERACTION WITH TP53 AND RB1</scope>
    <scope>SUBCELLULAR LOCATION</scope>
    <scope>TISSUE SPECIFICITY</scope>
    <source>
        <strain>BALB/cJ</strain>
        <tissue>Testis</tissue>
    </source>
</reference>
<reference key="6">
    <citation type="journal article" date="2002" name="J. Cell. Physiol.">
        <title>P2P-R protein localizes to the nucleolus of interphase cells and the periphery of chromosomes in mitotic cells which show maximum P2P-R immunoreactivity.</title>
        <authorList>
            <person name="Gao S."/>
            <person name="Witte M.M."/>
            <person name="Scott R.E."/>
        </authorList>
    </citation>
    <scope>SUBCELLULAR LOCATION</scope>
    <scope>DEVELOPMENTAL STAGE</scope>
</reference>
<reference key="7">
    <citation type="journal article" date="2002" name="J. Cell. Physiol.">
        <authorList>
            <person name="Gao S."/>
            <person name="Witte M.M."/>
            <person name="Scott R.E."/>
        </authorList>
    </citation>
    <scope>ERRATUM OF PUBMED:12064457</scope>
</reference>
<reference key="8">
    <citation type="journal article" date="2002" name="J. Cell. Physiol.">
        <title>P2P-R protein overexpression restricts mitotic progression at prometaphase and promotes mitotic apoptosis.</title>
        <authorList>
            <person name="Gao S."/>
            <person name="Scott R.E."/>
        </authorList>
    </citation>
    <scope>SUBCELLULAR LOCATION</scope>
</reference>
<reference key="9">
    <citation type="journal article" date="2003" name="J. Cell. Physiol.">
        <title>Stable overexpression of specific segments of the P2P-R protein in human MCF-7 cells promotes camptothecin-induced apoptosis.</title>
        <authorList>
            <person name="Gao S."/>
            <person name="Scott R.E."/>
        </authorList>
    </citation>
    <scope>INTERACTION WITH TP53</scope>
</reference>
<reference key="10">
    <citation type="journal article" date="2007" name="Proc. Natl. Acad. Sci. U.S.A.">
        <title>Large-scale phosphorylation analysis of mouse liver.</title>
        <authorList>
            <person name="Villen J."/>
            <person name="Beausoleil S.A."/>
            <person name="Gerber S.A."/>
            <person name="Gygi S.P."/>
        </authorList>
    </citation>
    <scope>PHOSPHORYLATION [LARGE SCALE ANALYSIS] AT THR-985; SER-1179; THR-1272 AND SER-1329</scope>
    <scope>IDENTIFICATION BY MASS SPECTROMETRY [LARGE SCALE ANALYSIS]</scope>
    <source>
        <tissue>Liver</tissue>
    </source>
</reference>
<reference key="11">
    <citation type="journal article" date="2007" name="Proc. Natl. Acad. Sci. U.S.A.">
        <title>PACT is a negative regulator of p53 and essential for cell growth and embryonic development.</title>
        <authorList>
            <person name="Li L."/>
            <person name="Deng B."/>
            <person name="Xing G."/>
            <person name="Teng Y."/>
            <person name="Tian C."/>
            <person name="Cheng X."/>
            <person name="Yin X."/>
            <person name="Yang J."/>
            <person name="Gao X."/>
            <person name="Zhu Y."/>
            <person name="Sun Q."/>
            <person name="Zhang L."/>
            <person name="Yang X."/>
            <person name="He F."/>
        </authorList>
    </citation>
    <scope>DISRUPTION PHENOTYPE</scope>
    <scope>FUNCTION</scope>
</reference>
<reference key="12">
    <citation type="journal article" date="2009" name="Immunity">
        <title>The phagosomal proteome in interferon-gamma-activated macrophages.</title>
        <authorList>
            <person name="Trost M."/>
            <person name="English L."/>
            <person name="Lemieux S."/>
            <person name="Courcelles M."/>
            <person name="Desjardins M."/>
            <person name="Thibault P."/>
        </authorList>
    </citation>
    <scope>PHOSPHORYLATION [LARGE SCALE ANALYSIS] AT SER-1179 AND SER-1329</scope>
    <scope>IDENTIFICATION BY MASS SPECTROMETRY [LARGE SCALE ANALYSIS]</scope>
</reference>
<reference key="13">
    <citation type="journal article" date="2010" name="Cell">
        <title>A tissue-specific atlas of mouse protein phosphorylation and expression.</title>
        <authorList>
            <person name="Huttlin E.L."/>
            <person name="Jedrychowski M.P."/>
            <person name="Elias J.E."/>
            <person name="Goswami T."/>
            <person name="Rad R."/>
            <person name="Beausoleil S.A."/>
            <person name="Villen J."/>
            <person name="Haas W."/>
            <person name="Sowa M.E."/>
            <person name="Gygi S.P."/>
        </authorList>
    </citation>
    <scope>PHOSPHORYLATION [LARGE SCALE ANALYSIS] AT SER-361; THR-985; SER-1179; SER-1278; SER-1329; SER-1648 AND SER-1651</scope>
    <scope>IDENTIFICATION BY MASS SPECTROMETRY [LARGE SCALE ANALYSIS]</scope>
    <source>
        <tissue>Brain</tissue>
        <tissue>Brown adipose tissue</tissue>
        <tissue>Heart</tissue>
        <tissue>Kidney</tissue>
        <tissue>Lung</tissue>
        <tissue>Pancreas</tissue>
        <tissue>Spleen</tissue>
        <tissue>Testis</tissue>
    </source>
</reference>
<reference key="14">
    <citation type="journal article" date="2013" name="Mol. Cell">
        <title>SIRT5-mediated lysine desuccinylation impacts diverse metabolic pathways.</title>
        <authorList>
            <person name="Park J."/>
            <person name="Chen Y."/>
            <person name="Tishkoff D.X."/>
            <person name="Peng C."/>
            <person name="Tan M."/>
            <person name="Dai L."/>
            <person name="Xie Z."/>
            <person name="Zhang Y."/>
            <person name="Zwaans B.M."/>
            <person name="Skinner M.E."/>
            <person name="Lombard D.B."/>
            <person name="Zhao Y."/>
        </authorList>
    </citation>
    <scope>ACETYLATION [LARGE SCALE ANALYSIS] AT LYS-130</scope>
    <scope>IDENTIFICATION BY MASS SPECTROMETRY [LARGE SCALE ANALYSIS]</scope>
    <source>
        <tissue>Embryonic fibroblast</tissue>
    </source>
</reference>
<reference key="15">
    <citation type="journal article" date="2014" name="Cell Rep.">
        <title>The RBBP6/ZBTB38/MCM10 axis regulates DNA replication and common fragile site stability.</title>
        <authorList>
            <person name="Miotto B."/>
            <person name="Chibi M."/>
            <person name="Xie P."/>
            <person name="Koundrioukoff S."/>
            <person name="Moolman-Smook H."/>
            <person name="Pugh D."/>
            <person name="Debatisse M."/>
            <person name="He F."/>
            <person name="Zhang L."/>
            <person name="Defossez P.A."/>
        </authorList>
    </citation>
    <scope>FUNCTION</scope>
</reference>
<feature type="chain" id="PRO_0000234355" description="E3 ubiquitin-protein ligase RBBP6">
    <location>
        <begin position="1"/>
        <end position="1790"/>
    </location>
</feature>
<feature type="domain" description="DWNN" evidence="5">
    <location>
        <begin position="4"/>
        <end position="76"/>
    </location>
</feature>
<feature type="zinc finger region" description="CCHC-type" evidence="3">
    <location>
        <begin position="160"/>
        <end position="177"/>
    </location>
</feature>
<feature type="zinc finger region" description="RING-type; degenerate" evidence="4">
    <location>
        <begin position="260"/>
        <end position="301"/>
    </location>
</feature>
<feature type="region of interest" description="Disordered" evidence="6">
    <location>
        <begin position="329"/>
        <end position="353"/>
    </location>
</feature>
<feature type="region of interest" description="Disordered" evidence="6">
    <location>
        <begin position="374"/>
        <end position="408"/>
    </location>
</feature>
<feature type="region of interest" description="Disordered" evidence="6">
    <location>
        <begin position="533"/>
        <end position="599"/>
    </location>
</feature>
<feature type="region of interest" description="Disordered" evidence="6">
    <location>
        <begin position="622"/>
        <end position="641"/>
    </location>
</feature>
<feature type="region of interest" description="Disordered" evidence="6">
    <location>
        <begin position="648"/>
        <end position="667"/>
    </location>
</feature>
<feature type="region of interest" description="Disordered" evidence="6">
    <location>
        <begin position="675"/>
        <end position="797"/>
    </location>
</feature>
<feature type="region of interest" description="Disordered" evidence="6">
    <location>
        <begin position="850"/>
        <end position="1292"/>
    </location>
</feature>
<feature type="region of interest" description="Interaction with RB1">
    <location>
        <begin position="983"/>
        <end position="1139"/>
    </location>
</feature>
<feature type="region of interest" description="Disordered" evidence="6">
    <location>
        <begin position="1322"/>
        <end position="1790"/>
    </location>
</feature>
<feature type="region of interest" description="Interaction with p53">
    <location>
        <begin position="1434"/>
        <end position="1544"/>
    </location>
</feature>
<feature type="compositionally biased region" description="Pro residues" evidence="6">
    <location>
        <begin position="337"/>
        <end position="349"/>
    </location>
</feature>
<feature type="compositionally biased region" description="Low complexity" evidence="6">
    <location>
        <begin position="376"/>
        <end position="390"/>
    </location>
</feature>
<feature type="compositionally biased region" description="Pro residues" evidence="6">
    <location>
        <begin position="558"/>
        <end position="599"/>
    </location>
</feature>
<feature type="compositionally biased region" description="Polar residues" evidence="6">
    <location>
        <begin position="622"/>
        <end position="635"/>
    </location>
</feature>
<feature type="compositionally biased region" description="Low complexity" evidence="6">
    <location>
        <begin position="686"/>
        <end position="720"/>
    </location>
</feature>
<feature type="compositionally biased region" description="Basic residues" evidence="6">
    <location>
        <begin position="736"/>
        <end position="771"/>
    </location>
</feature>
<feature type="compositionally biased region" description="Basic and acidic residues" evidence="6">
    <location>
        <begin position="903"/>
        <end position="923"/>
    </location>
</feature>
<feature type="compositionally biased region" description="Basic residues" evidence="6">
    <location>
        <begin position="932"/>
        <end position="941"/>
    </location>
</feature>
<feature type="compositionally biased region" description="Basic and acidic residues" evidence="6">
    <location>
        <begin position="956"/>
        <end position="972"/>
    </location>
</feature>
<feature type="compositionally biased region" description="Basic and acidic residues" evidence="6">
    <location>
        <begin position="980"/>
        <end position="991"/>
    </location>
</feature>
<feature type="compositionally biased region" description="Basic and acidic residues" evidence="6">
    <location>
        <begin position="1002"/>
        <end position="1018"/>
    </location>
</feature>
<feature type="compositionally biased region" description="Basic and acidic residues" evidence="6">
    <location>
        <begin position="1042"/>
        <end position="1072"/>
    </location>
</feature>
<feature type="compositionally biased region" description="Basic and acidic residues" evidence="6">
    <location>
        <begin position="1096"/>
        <end position="1161"/>
    </location>
</feature>
<feature type="compositionally biased region" description="Basic and acidic residues" evidence="6">
    <location>
        <begin position="1182"/>
        <end position="1200"/>
    </location>
</feature>
<feature type="compositionally biased region" description="Basic and acidic residues" evidence="6">
    <location>
        <begin position="1231"/>
        <end position="1249"/>
    </location>
</feature>
<feature type="compositionally biased region" description="Polar residues" evidence="6">
    <location>
        <begin position="1260"/>
        <end position="1277"/>
    </location>
</feature>
<feature type="compositionally biased region" description="Basic and acidic residues" evidence="6">
    <location>
        <begin position="1281"/>
        <end position="1291"/>
    </location>
</feature>
<feature type="compositionally biased region" description="Polar residues" evidence="6">
    <location>
        <begin position="1336"/>
        <end position="1358"/>
    </location>
</feature>
<feature type="compositionally biased region" description="Basic and acidic residues" evidence="6">
    <location>
        <begin position="1363"/>
        <end position="1392"/>
    </location>
</feature>
<feature type="compositionally biased region" description="Basic and acidic residues" evidence="6">
    <location>
        <begin position="1400"/>
        <end position="1440"/>
    </location>
</feature>
<feature type="compositionally biased region" description="Basic and acidic residues" evidence="6">
    <location>
        <begin position="1449"/>
        <end position="1460"/>
    </location>
</feature>
<feature type="compositionally biased region" description="Basic and acidic residues" evidence="6">
    <location>
        <begin position="1469"/>
        <end position="1507"/>
    </location>
</feature>
<feature type="compositionally biased region" description="Basic and acidic residues" evidence="6">
    <location>
        <begin position="1515"/>
        <end position="1580"/>
    </location>
</feature>
<feature type="compositionally biased region" description="Polar residues" evidence="6">
    <location>
        <begin position="1618"/>
        <end position="1627"/>
    </location>
</feature>
<feature type="compositionally biased region" description="Acidic residues" evidence="6">
    <location>
        <begin position="1634"/>
        <end position="1646"/>
    </location>
</feature>
<feature type="compositionally biased region" description="Basic and acidic residues" evidence="6">
    <location>
        <begin position="1663"/>
        <end position="1675"/>
    </location>
</feature>
<feature type="compositionally biased region" description="Low complexity" evidence="6">
    <location>
        <begin position="1689"/>
        <end position="1724"/>
    </location>
</feature>
<feature type="compositionally biased region" description="Basic residues" evidence="6">
    <location>
        <begin position="1727"/>
        <end position="1750"/>
    </location>
</feature>
<feature type="compositionally biased region" description="Basic and acidic residues" evidence="6">
    <location>
        <begin position="1751"/>
        <end position="1760"/>
    </location>
</feature>
<feature type="compositionally biased region" description="Basic residues" evidence="6">
    <location>
        <begin position="1761"/>
        <end position="1773"/>
    </location>
</feature>
<feature type="compositionally biased region" description="Basic and acidic residues" evidence="6">
    <location>
        <begin position="1774"/>
        <end position="1790"/>
    </location>
</feature>
<feature type="modified residue" description="N6-acetyllysine" evidence="20">
    <location>
        <position position="130"/>
    </location>
</feature>
<feature type="modified residue" description="Phosphoserine" evidence="2">
    <location>
        <position position="245"/>
    </location>
</feature>
<feature type="modified residue" description="Phosphoserine" evidence="2">
    <location>
        <position position="246"/>
    </location>
</feature>
<feature type="modified residue" description="Phosphoserine" evidence="2">
    <location>
        <position position="247"/>
    </location>
</feature>
<feature type="modified residue" description="Phosphoserine" evidence="2">
    <location>
        <position position="248"/>
    </location>
</feature>
<feature type="modified residue" description="Phosphoserine" evidence="19">
    <location>
        <position position="361"/>
    </location>
</feature>
<feature type="modified residue" description="Phosphoserine" evidence="2">
    <location>
        <position position="517"/>
    </location>
</feature>
<feature type="modified residue" description="Phosphoserine" evidence="2">
    <location>
        <position position="769"/>
    </location>
</feature>
<feature type="modified residue" description="Phosphoserine" evidence="2">
    <location>
        <position position="771"/>
    </location>
</feature>
<feature type="modified residue" description="Phosphoserine" evidence="2">
    <location>
        <position position="773"/>
    </location>
</feature>
<feature type="modified residue" description="Phosphoserine" evidence="2">
    <location>
        <position position="781"/>
    </location>
</feature>
<feature type="modified residue" description="Phosphoserine" evidence="2">
    <location>
        <position position="816"/>
    </location>
</feature>
<feature type="modified residue" description="Phosphoserine" evidence="2">
    <location>
        <position position="862"/>
    </location>
</feature>
<feature type="modified residue" description="Phosphoserine" evidence="2">
    <location>
        <position position="874"/>
    </location>
</feature>
<feature type="modified residue" description="Phosphoserine" evidence="2">
    <location>
        <position position="958"/>
    </location>
</feature>
<feature type="modified residue" description="Phosphothreonine" evidence="17 19">
    <location>
        <position position="985"/>
    </location>
</feature>
<feature type="modified residue" description="Phosphoserine" evidence="17 18 19">
    <location>
        <position position="1179"/>
    </location>
</feature>
<feature type="modified residue" description="Phosphothreonine" evidence="17">
    <location>
        <position position="1272"/>
    </location>
</feature>
<feature type="modified residue" description="Phosphoserine" evidence="19">
    <location>
        <position position="1278"/>
    </location>
</feature>
<feature type="modified residue" description="Phosphoserine" evidence="17 18 19">
    <location>
        <position position="1329"/>
    </location>
</feature>
<feature type="modified residue" description="Phosphoserine" evidence="2">
    <location>
        <position position="1342"/>
    </location>
</feature>
<feature type="modified residue" description="Phosphoserine" evidence="2">
    <location>
        <position position="1348"/>
    </location>
</feature>
<feature type="modified residue" description="Phosphothreonine" evidence="2">
    <location>
        <position position="1469"/>
    </location>
</feature>
<feature type="modified residue" description="Phosphoserine" evidence="2">
    <location>
        <position position="1646"/>
    </location>
</feature>
<feature type="modified residue" description="Phosphoserine" evidence="19">
    <location>
        <position position="1648"/>
    </location>
</feature>
<feature type="modified residue" description="Phosphoserine" evidence="19">
    <location>
        <position position="1651"/>
    </location>
</feature>
<feature type="cross-link" description="Glycyl lysine isopeptide (Lys-Gly) (interchain with G-Cter in SUMO2)" evidence="2">
    <location>
        <position position="1107"/>
    </location>
</feature>
<feature type="cross-link" description="Glycyl lysine isopeptide (Lys-Gly) (interchain with G-Cter in SUMO2)" evidence="2">
    <location>
        <position position="1169"/>
    </location>
</feature>
<feature type="splice variant" id="VSP_018285" description="In isoform 3." evidence="13 14">
    <original>IDDASASISLAQLTKTANLAEA</original>
    <variation>VCKNTITLFLHNCFYLYNVSVT</variation>
    <location>
        <begin position="102"/>
        <end position="123"/>
    </location>
</feature>
<feature type="splice variant" id="VSP_018286" description="In isoform 3." evidence="13 14">
    <location>
        <begin position="124"/>
        <end position="1756"/>
    </location>
</feature>
<feature type="splice variant" id="VSP_018287" description="In isoform 2." evidence="14 15">
    <location>
        <begin position="653"/>
        <end position="686"/>
    </location>
</feature>
<feature type="sequence conflict" description="In Ref. 5; AAB49620." evidence="16" ref="5">
    <original>I</original>
    <variation>F</variation>
    <location>
        <position position="254"/>
    </location>
</feature>
<feature type="sequence conflict" description="In Ref. 4; AAC72432." evidence="16" ref="4">
    <original>RQ</original>
    <variation>GR</variation>
    <location>
        <begin position="317"/>
        <end position="318"/>
    </location>
</feature>
<feature type="sequence conflict" description="In Ref. 5; AAB49620." evidence="16" ref="5">
    <original>P</original>
    <variation>H</variation>
    <location>
        <position position="341"/>
    </location>
</feature>
<feature type="sequence conflict" description="In Ref. 4; AAC72432." evidence="16" ref="4">
    <original>S</original>
    <variation>F</variation>
    <location>
        <position position="418"/>
    </location>
</feature>
<feature type="sequence conflict" description="In Ref. 5; AAB49620." evidence="16" ref="5">
    <original>V</original>
    <variation>S</variation>
    <location>
        <position position="421"/>
    </location>
</feature>
<feature type="sequence conflict" description="In Ref. 4; AAC72432." evidence="16" ref="4">
    <original>P</original>
    <variation>L</variation>
    <location>
        <position position="580"/>
    </location>
</feature>
<feature type="sequence conflict" description="In Ref. 4; AAC72432." evidence="16" ref="4">
    <original>P</original>
    <variation>T</variation>
    <location>
        <position position="595"/>
    </location>
</feature>
<feature type="sequence conflict" description="In Ref. 4; AAC72432." evidence="16" ref="4">
    <original>PWVSSGVQ</original>
    <variation>ACFSPGVP</variation>
    <location>
        <begin position="615"/>
        <end position="622"/>
    </location>
</feature>
<feature type="sequence conflict" description="In Ref. 4; AAC72432." evidence="16" ref="4">
    <original>I</original>
    <variation>M</variation>
    <location>
        <position position="629"/>
    </location>
</feature>
<feature type="sequence conflict" description="In Ref. 4; AAC72432." evidence="16" ref="4">
    <original>P</original>
    <variation>L</variation>
    <location>
        <position position="636"/>
    </location>
</feature>
<feature type="sequence conflict" description="In Ref. 4; AAC72432." evidence="16" ref="4">
    <original>R</original>
    <variation>K</variation>
    <location>
        <position position="647"/>
    </location>
</feature>
<feature type="sequence conflict" description="In Ref. 4; AAC72432." evidence="16" ref="4">
    <original>S</original>
    <variation>F</variation>
    <location>
        <position position="689"/>
    </location>
</feature>
<feature type="sequence conflict" description="In Ref. 4; AAC72432." evidence="16" ref="4">
    <original>Y</original>
    <variation>D</variation>
    <location>
        <position position="703"/>
    </location>
</feature>
<feature type="sequence conflict" description="In Ref. 4; AAC72432." evidence="16" ref="4">
    <original>Q</original>
    <variation>R</variation>
    <location>
        <position position="789"/>
    </location>
</feature>
<feature type="sequence conflict" description="In Ref. 1; BAE36255." evidence="16" ref="1">
    <original>R</original>
    <variation>Q</variation>
    <location>
        <position position="940"/>
    </location>
</feature>
<feature type="sequence conflict" description="In Ref. 4; AAC72432." evidence="16" ref="4">
    <original>R</original>
    <variation>RNEE</variation>
    <location>
        <position position="941"/>
    </location>
</feature>
<feature type="sequence conflict" description="In Ref. 4; AAC72432." evidence="16" ref="4">
    <original>ETS</original>
    <variation>GKF</variation>
    <location>
        <begin position="956"/>
        <end position="958"/>
    </location>
</feature>
<feature type="sequence conflict" description="In Ref. 4; AAC72432." evidence="16" ref="4">
    <original>E</original>
    <variation>G</variation>
    <location>
        <position position="963"/>
    </location>
</feature>
<feature type="sequence conflict" description="In Ref. 4; AAC72432." evidence="16" ref="4">
    <original>L</original>
    <variation>F</variation>
    <location>
        <position position="978"/>
    </location>
</feature>
<feature type="sequence conflict" description="In Ref. 4; AAC72432." evidence="16" ref="4">
    <original>D</original>
    <variation>E</variation>
    <location>
        <position position="982"/>
    </location>
</feature>
<feature type="sequence conflict" description="In Ref. 5; AAB49620." evidence="16" ref="5">
    <original>K</original>
    <variation>N</variation>
    <location>
        <position position="1012"/>
    </location>
</feature>
<feature type="sequence conflict" description="In Ref. 4; AAC72432." evidence="16" ref="4">
    <original>K</original>
    <variation>T</variation>
    <location>
        <position position="1290"/>
    </location>
</feature>
<feature type="sequence conflict" description="In Ref. 4; AAC72432." evidence="16" ref="4">
    <original>Q</original>
    <variation>H</variation>
    <location>
        <position position="1316"/>
    </location>
</feature>
<feature type="sequence conflict" description="In Ref. 4; AAC72432." evidence="16" ref="4">
    <original>N</original>
    <variation>I</variation>
    <location>
        <position position="1564"/>
    </location>
</feature>
<feature type="sequence conflict" description="In Ref. 4; AAC72432." evidence="16" ref="4">
    <original>E</original>
    <variation>D</variation>
    <location>
        <position position="1581"/>
    </location>
</feature>
<feature type="sequence conflict" description="In Ref. 4; AAC72432." evidence="16" ref="4">
    <original>P</original>
    <variation>L</variation>
    <location>
        <position position="1591"/>
    </location>
</feature>
<feature type="sequence conflict" description="In Ref. 4; AAC72432." evidence="16" ref="4">
    <original>P</original>
    <variation>L</variation>
    <location>
        <position position="1596"/>
    </location>
</feature>
<feature type="sequence conflict" description="In Ref. 4; AAC72432." evidence="16" ref="4">
    <original>A</original>
    <variation>V</variation>
    <location>
        <position position="1604"/>
    </location>
</feature>
<name>RBBP6_MOUSE</name>
<protein>
    <recommendedName>
        <fullName>E3 ubiquitin-protein ligase RBBP6</fullName>
        <ecNumber>2.3.2.27</ecNumber>
    </recommendedName>
    <alternativeName>
        <fullName>Proliferation potential-related protein</fullName>
    </alternativeName>
    <alternativeName>
        <fullName>Protein P2P-R</fullName>
    </alternativeName>
    <alternativeName>
        <fullName evidence="16">RING-type E3 ubiquitin transferase RBBP6</fullName>
    </alternativeName>
    <alternativeName>
        <fullName>Retinoblastoma-binding protein 6</fullName>
    </alternativeName>
    <alternativeName>
        <fullName>p53-associated cellular protein of testis</fullName>
    </alternativeName>
</protein>
<comment type="function">
    <text evidence="2 9 10">E3 ubiquitin-protein ligase which promotes ubiquitination of YBX1, leading to its degradation by the proteasome (By similarity). May play a role as a scaffold protein to promote the assembly of the p53/TP53-MDM2 complex, resulting in increase of MDM2-mediated ubiquitination and degradation of p53/TP53; may function as negative regulator of p53/TP53, leading to both apoptosis and cell growth retardation (PubMed:17470788). Regulates DNA-replication and common fragile sites (CFS) stability in a ZBTB38- and MCM10-dependent manner. Controls ZBTB38 protein stability and abundance via ubiquitination and proteasomal degradation, and ZBTB38 in turn negatively regulates the expression of MCM10 which plays an important role in DNA-replication (PubMed:24726359).</text>
</comment>
<comment type="catalytic activity">
    <reaction>
        <text>S-ubiquitinyl-[E2 ubiquitin-conjugating enzyme]-L-cysteine + [acceptor protein]-L-lysine = [E2 ubiquitin-conjugating enzyme]-L-cysteine + N(6)-ubiquitinyl-[acceptor protein]-L-lysine.</text>
        <dbReference type="EC" id="2.3.2.27"/>
    </reaction>
</comment>
<comment type="pathway">
    <text>Protein modification; protein ubiquitination.</text>
</comment>
<comment type="subunit">
    <text evidence="2 8 11 12">Interacts with MDM2 and YBX1 (By similarity). Also interacts with p53/TP53 and RB1. Interacts with NEK6 (By similarity). Interacts with ZBTB38 (By similarity).</text>
</comment>
<comment type="subcellular location">
    <subcellularLocation>
        <location>Nucleus</location>
        <location>Nucleolus</location>
    </subcellularLocation>
    <subcellularLocation>
        <location>Chromosome</location>
    </subcellularLocation>
    <subcellularLocation>
        <location evidence="1">Cytoplasm</location>
        <location evidence="1">Cytoskeleton</location>
        <location evidence="1">Microtubule organizing center</location>
        <location evidence="1">Centrosome</location>
    </subcellularLocation>
    <text evidence="1">Colocalizes with mitotic chromosomes. Co-localizes with NEK6 in the centrosome (By similarity).</text>
</comment>
<comment type="alternative products">
    <event type="alternative splicing"/>
    <isoform>
        <id>P97868-1</id>
        <name>1</name>
        <sequence type="displayed"/>
    </isoform>
    <isoform>
        <id>P97868-2</id>
        <name>2</name>
        <sequence type="described" ref="VSP_018287"/>
    </isoform>
    <isoform>
        <id>P97868-3</id>
        <name>3</name>
        <sequence type="described" ref="VSP_018285 VSP_018286"/>
    </isoform>
</comment>
<comment type="tissue specificity">
    <text evidence="11 12">Highly expressed in testis. Expressed at lower levels in brain, heart, kidney, liver, lung, skeletal muscle, spleen, thymus and tongue.</text>
</comment>
<comment type="developmental stage">
    <text evidence="7 12">Expression is reduced during terminal differentiation. Expression is induced in the G2/M phase of the cell cycle (at protein level).</text>
</comment>
<comment type="domain">
    <text evidence="2">Contains a N-terminus DWNN domain, a zinc-finger domain and a C4C4 zinc-binding RING finger domain (By similarity). The ring finger may indeed be a U-box domain (By similarity).</text>
</comment>
<comment type="PTM">
    <text evidence="1">Phosphorylated by NEK6.</text>
</comment>
<comment type="disruption phenotype">
    <text evidence="9">Early embryonic lethality before 7.5 dpc, accompanied by accumulation of p53 and widespread apoptosis.</text>
</comment>
<comment type="sequence caution" evidence="16">
    <conflict type="frameshift">
        <sequence resource="EMBL-CDS" id="AAC72432"/>
    </conflict>
</comment>
<sequence length="1790" mass="199587">MSCVHYKFSSKLNYDTVTFDGLHISLCDLKKQIMGREKLKAADSDLQITNAQTKEEYTDDNALIPKNSSVIVRRIPIGGVKSTSKTYVISRTEPVMGTTKAIDDASASISLAQLTKTANLAEANASEEDKIKAMMSQSGHEYDPINYMKKTLVGPPPPSYTCFRCGKPGHYIKNCPTNGDKNFESGPRIKKSTGIPRSFMMEVKDPNMKGAMLTNTGKYAIPTIDAEAYAIGKKEKPPFLPEEPSSSSEEDDPIPDELLCLICKDIMTDAVVIPCCGNSYCDECIRTALLESDEHTCPTCHQNDVSPDALIANKFLRQAVNNFKNETGYTKRLRKQLPPPPPPVPPPRPLMQRNLQPLMRSPISRQQDPLMIPVTSSSAHSAPSISSLTSNPSALAPSVSGNPSSAPAPVPDITATVSISVHSEKSDGPFRDSDNKLLPAAALTSEHSKGASSIAITALMEEKGYQVPVLGTPSLLGQSLLHGQLIPTTGPVRINAARPGGGRPGWEHSNKLGYLVSPPQQIRRGERSCYRSINRGRHHSERSQRTQGPSLPATPVFVPVPPPPLYPPPPHTLPLPPGVPPPQFSPQFPPGQPPPAGYSVPPPGFPPAPANISTPWVSSGVQTAHSNTIPTTQAPPLSREEFYREQRRLKEEEKKKSKLDEFTNDFAKELMEYKKIQKERRRSFSRSKSPYSGSSYSRSSYTYSKSRSGSTRSRSYSRSFSRSHSRSYSRSPPYPRRGRGKSRNYRSRSRSHGYHRSRSRSPPYRRYHSRSRSPQAFRGQSPTKRNVPQGETEREYFNRYREVPPPYDIKAYYGRSVDFRDPFEKERYREWERKYREWYEKYYKGYAVGAQPRPSANREDFSPERLLPLNIRNSPFTRGRREDYAAGQSHRNRNLGGNYPEKLSTRDSHNAKDNPKSKEKESENVPGDGKGNKHKKHRKRRKGEESESFLNPELLETSRKCRESSGIDETKTDTLFVLPSRDDATPVRDEPMDAESITFKSVSDKDKREKDKPKVKSDKTKRKSDGSATAKKDNVLKPSKGPQEKVDGDREKSPRSEPPLKKAKEEATKIDSVKPSSSSQKDEKVTGTPRKAHSKSAKEHQEAKPAKDEKVKKDCSKDIKSEKPASKDEKAKKPEKNKLLDSKGEKRKRKTEEKSVDKDFESSSMKISKVEGTEIVKPSPKRKMEGDVEKLERTPEKDKIASSTTPAKKIKLNRETGKKIGNAENASTTKEPSEKLESTSSKIKQEKVKGKAKRKVAGSEGSSSTLVDYTSTSSTGGSPVRKSEEKTDTKRTVIKTMEEYNNDNTAPAEDVIIMIQVPQSKWDKDDFESEEEDVKTTQPIQSVGKPSSIIKNVTTKPSATAKYTEKESEQPEKLQKLPKEASHELMQHELRSSKGSASSEKGRAKDREHSGSEKDNPDKRKSGAQPDKESTVDRLSEQGHFKTLSQSSKETRTSEKHESVRGSSNKDFTPGRDKKVDYDSRDYSSSKRRDERGELARRKDSPPRGKESLSGQKSKLREERDLPKKGAESKKSNSSPPRDKKPHDHKAPYETKRPCEETKPVDKNSGKEREKHAAEARNGKESSGGKLPCIPNPPDPPMEKELAAGQVEKSAVKPKPQLSHSSRLSSDLTRETDEAAFEPDYNESDSESNVSVKEEEAVASISKDLKEKTTEKAKESLTVATASQPGADRSQSQSSPSVSPSRSHSPSGSQTRSHSSSASSAGSQDSKKKKKKKEKKKHKKHKKHKKHKKHAGADGDVEKSQKHKHKKKKAKKNKDKEKEKDDQKVRSVTV</sequence>
<keyword id="KW-0007">Acetylation</keyword>
<keyword id="KW-0025">Alternative splicing</keyword>
<keyword id="KW-0158">Chromosome</keyword>
<keyword id="KW-0963">Cytoplasm</keyword>
<keyword id="KW-0206">Cytoskeleton</keyword>
<keyword id="KW-0227">DNA damage</keyword>
<keyword id="KW-0235">DNA replication</keyword>
<keyword id="KW-1017">Isopeptide bond</keyword>
<keyword id="KW-0479">Metal-binding</keyword>
<keyword id="KW-0539">Nucleus</keyword>
<keyword id="KW-0597">Phosphoprotein</keyword>
<keyword id="KW-1185">Reference proteome</keyword>
<keyword id="KW-0808">Transferase</keyword>
<keyword id="KW-0832">Ubl conjugation</keyword>
<keyword id="KW-0833">Ubl conjugation pathway</keyword>
<keyword id="KW-0862">Zinc</keyword>
<keyword id="KW-0863">Zinc-finger</keyword>
<accession>P97868</accession>
<accession>P70287</accession>
<accession>Q3TTR9</accession>
<accession>Q3TUM7</accession>
<accession>Q3UMP7</accession>
<accession>Q4U217</accession>
<accession>Q7TT06</accession>
<accession>Q8BNY8</accession>
<accession>Q8R399</accession>
<evidence type="ECO:0000250" key="1"/>
<evidence type="ECO:0000250" key="2">
    <source>
        <dbReference type="UniProtKB" id="Q7Z6E9"/>
    </source>
</evidence>
<evidence type="ECO:0000255" key="3">
    <source>
        <dbReference type="PROSITE-ProRule" id="PRU00047"/>
    </source>
</evidence>
<evidence type="ECO:0000255" key="4">
    <source>
        <dbReference type="PROSITE-ProRule" id="PRU00175"/>
    </source>
</evidence>
<evidence type="ECO:0000255" key="5">
    <source>
        <dbReference type="PROSITE-ProRule" id="PRU00612"/>
    </source>
</evidence>
<evidence type="ECO:0000256" key="6">
    <source>
        <dbReference type="SAM" id="MobiDB-lite"/>
    </source>
</evidence>
<evidence type="ECO:0000269" key="7">
    <source>
    </source>
</evidence>
<evidence type="ECO:0000269" key="8">
    <source>
    </source>
</evidence>
<evidence type="ECO:0000269" key="9">
    <source>
    </source>
</evidence>
<evidence type="ECO:0000269" key="10">
    <source>
    </source>
</evidence>
<evidence type="ECO:0000269" key="11">
    <source>
    </source>
</evidence>
<evidence type="ECO:0000269" key="12">
    <source>
    </source>
</evidence>
<evidence type="ECO:0000303" key="13">
    <source>
    </source>
</evidence>
<evidence type="ECO:0000303" key="14">
    <source>
    </source>
</evidence>
<evidence type="ECO:0000303" key="15">
    <source>
    </source>
</evidence>
<evidence type="ECO:0000305" key="16"/>
<evidence type="ECO:0007744" key="17">
    <source>
    </source>
</evidence>
<evidence type="ECO:0007744" key="18">
    <source>
    </source>
</evidence>
<evidence type="ECO:0007744" key="19">
    <source>
    </source>
</evidence>
<evidence type="ECO:0007744" key="20">
    <source>
    </source>
</evidence>
<organism>
    <name type="scientific">Mus musculus</name>
    <name type="common">Mouse</name>
    <dbReference type="NCBI Taxonomy" id="10090"/>
    <lineage>
        <taxon>Eukaryota</taxon>
        <taxon>Metazoa</taxon>
        <taxon>Chordata</taxon>
        <taxon>Craniata</taxon>
        <taxon>Vertebrata</taxon>
        <taxon>Euteleostomi</taxon>
        <taxon>Mammalia</taxon>
        <taxon>Eutheria</taxon>
        <taxon>Euarchontoglires</taxon>
        <taxon>Glires</taxon>
        <taxon>Rodentia</taxon>
        <taxon>Myomorpha</taxon>
        <taxon>Muroidea</taxon>
        <taxon>Muridae</taxon>
        <taxon>Murinae</taxon>
        <taxon>Mus</taxon>
        <taxon>Mus</taxon>
    </lineage>
</organism>
<gene>
    <name type="primary">Rbbp6</name>
    <name type="synonym">P2pr</name>
    <name type="synonym">Pact</name>
</gene>